<reference key="1">
    <citation type="journal article" date="1992" name="J. Virol.">
        <title>An infectious molecular clone of an unusual macrophage-tropic and highly cytopathic strain of human immunodeficiency virus type 1.</title>
        <authorList>
            <person name="Collman R."/>
            <person name="Balliet J.W."/>
            <person name="Gregory S.A."/>
            <person name="Friedman H."/>
            <person name="Kolson D.L."/>
            <person name="Nathanson N."/>
            <person name="Srinivasan A."/>
        </authorList>
    </citation>
    <scope>NUCLEOTIDE SEQUENCE [GENOMIC DNA]</scope>
</reference>
<reference key="2">
    <citation type="journal article" date="1994" name="J. Biol. Chem.">
        <title>Biochemical mechanism of HIV-I Vpr function. Specific interaction with a cellular protein.</title>
        <authorList>
            <person name="Zhao L.-J."/>
            <person name="Mukherjee S."/>
            <person name="Narayan O."/>
        </authorList>
    </citation>
    <scope>INTERACTION WITH HUMAN COPS6/HVIP</scope>
</reference>
<reference key="3">
    <citation type="journal article" date="1994" name="J. Biol. Chem.">
        <title>Biochemical mechanism of HIV-1 Vpr function. Oligomerization mediated by the N-terminal domain.</title>
        <authorList>
            <person name="Zhao L.J."/>
            <person name="Wang L."/>
            <person name="Mukherjee S."/>
            <person name="Narayan O."/>
        </authorList>
    </citation>
    <scope>HOMOOLIGOMERIZATION</scope>
</reference>
<reference key="4">
    <citation type="journal article" date="2001" name="Gene">
        <title>Cytoplasmic retention of HIV-1 regulatory protein Vpr by protein-protein interaction with a novel human cytoplasmic protein VprBP.</title>
        <authorList>
            <person name="Zhang S."/>
            <person name="Feng Y."/>
            <person name="Narayan O."/>
            <person name="Zhao L.-J."/>
        </authorList>
    </citation>
    <scope>INTERACTION WITH HUMAN DCAF1</scope>
</reference>
<reference key="5">
    <citation type="journal article" date="2007" name="Cell Cycle">
        <title>HIV1 Vpr arrests the cell cycle by recruiting DCAF1/VprBP, a receptor of the Cul4-DDB1 ubiquitin ligase.</title>
        <authorList>
            <person name="Le Rouzic E."/>
            <person name="Belaiedouni N."/>
            <person name="Estrabaud E."/>
            <person name="Morel M."/>
            <person name="Rain J.-C."/>
            <person name="Transy C."/>
            <person name="Margottin-Goguet F."/>
        </authorList>
    </citation>
    <scope>INTERACTION WITH HUMAN DCAF1</scope>
</reference>
<reference key="6">
    <citation type="journal article" date="1999" name="Eur. J. Biochem.">
        <title>NMR structure of the (1-51) N-terminal domain of the HIV-1 regulatory protein Vpr.</title>
        <authorList>
            <person name="Wecker K."/>
            <person name="Roques B.P."/>
        </authorList>
    </citation>
    <scope>STRUCTURE BY NMR OF 1-51</scope>
</reference>
<reference key="7">
    <citation type="journal article" date="2002" name="Eur. J. Biochem.">
        <title>NMR structure of the HIV-1 regulatory protein Vpr in H2O/trifluoroethanol. Comparison with the Vpr N-terminal (1-51) and C-terminal (52-96) domains.</title>
        <authorList>
            <person name="Wecker K."/>
            <person name="Morellet N."/>
            <person name="Bouaziz S."/>
            <person name="Roques B.P."/>
        </authorList>
    </citation>
    <scope>STRUCTURE BY NMR</scope>
</reference>
<reference key="8">
    <citation type="journal article" date="2003" name="J. Mol. Biol.">
        <title>NMR structure of the HIV-1 regulatory protein VPR.</title>
        <authorList>
            <person name="Morellet N."/>
            <person name="Bouaziz S."/>
            <person name="Petitjean P."/>
            <person name="Roques B.P."/>
        </authorList>
    </citation>
    <scope>STRUCTURE BY NMR</scope>
</reference>
<reference key="9">
    <citation type="journal article" date="1999" name="J. Mol. Biol.">
        <title>NMR structure of the (52-96) C-terminal domain of the HIV-1 regulatory protein Vpr: molecular insights into its biological functions.</title>
        <authorList>
            <person name="Schuler W."/>
            <person name="Wecker K."/>
            <person name="de Rocquigny H."/>
            <person name="Baudat Y."/>
            <person name="Sire J."/>
            <person name="Roques B.P."/>
        </authorList>
    </citation>
    <scope>STRUCTURE BY NMR OF 52-96</scope>
</reference>
<dbReference type="EMBL" id="U39362">
    <property type="protein sequence ID" value="AAA81039.1"/>
    <property type="molecule type" value="Genomic_DNA"/>
</dbReference>
<dbReference type="PDB" id="1CEU">
    <property type="method" value="NMR"/>
    <property type="chains" value="A=1-51"/>
</dbReference>
<dbReference type="PDB" id="1ESX">
    <property type="method" value="NMR"/>
    <property type="chains" value="A=1-96"/>
</dbReference>
<dbReference type="PDB" id="1M8L">
    <property type="method" value="NMR"/>
    <property type="chains" value="A=1-96"/>
</dbReference>
<dbReference type="PDB" id="1VPC">
    <property type="method" value="NMR"/>
    <property type="chains" value="A=52-96"/>
</dbReference>
<dbReference type="PDB" id="1X9V">
    <property type="method" value="NMR"/>
    <property type="chains" value="A/B=52-96"/>
</dbReference>
<dbReference type="PDB" id="5B56">
    <property type="method" value="X-ray"/>
    <property type="resolution" value="2.30 A"/>
    <property type="chains" value="C/D/E/F=85-96"/>
</dbReference>
<dbReference type="PDBsum" id="1CEU"/>
<dbReference type="PDBsum" id="1ESX"/>
<dbReference type="PDBsum" id="1M8L"/>
<dbReference type="PDBsum" id="1VPC"/>
<dbReference type="PDBsum" id="1X9V"/>
<dbReference type="PDBsum" id="5B56"/>
<dbReference type="BMRB" id="Q73369"/>
<dbReference type="SMR" id="Q73369"/>
<dbReference type="EvolutionaryTrace" id="Q73369"/>
<dbReference type="Proteomes" id="UP000007691">
    <property type="component" value="Genome"/>
</dbReference>
<dbReference type="GO" id="GO:0043657">
    <property type="term" value="C:host cell"/>
    <property type="evidence" value="ECO:0007669"/>
    <property type="project" value="GOC"/>
</dbReference>
<dbReference type="GO" id="GO:0042025">
    <property type="term" value="C:host cell nucleus"/>
    <property type="evidence" value="ECO:0007669"/>
    <property type="project" value="UniProtKB-SubCell"/>
</dbReference>
<dbReference type="GO" id="GO:0043655">
    <property type="term" value="C:host extracellular space"/>
    <property type="evidence" value="ECO:0007669"/>
    <property type="project" value="UniProtKB-SubCell"/>
</dbReference>
<dbReference type="GO" id="GO:0044423">
    <property type="term" value="C:virion component"/>
    <property type="evidence" value="ECO:0007669"/>
    <property type="project" value="UniProtKB-UniRule"/>
</dbReference>
<dbReference type="GO" id="GO:0006351">
    <property type="term" value="P:DNA-templated transcription"/>
    <property type="evidence" value="ECO:0007669"/>
    <property type="project" value="UniProtKB-UniRule"/>
</dbReference>
<dbReference type="GO" id="GO:0034220">
    <property type="term" value="P:monoatomic ion transmembrane transport"/>
    <property type="evidence" value="ECO:0007669"/>
    <property type="project" value="UniProtKB-KW"/>
</dbReference>
<dbReference type="GO" id="GO:0051260">
    <property type="term" value="P:protein homooligomerization"/>
    <property type="evidence" value="ECO:0007669"/>
    <property type="project" value="UniProtKB-UniRule"/>
</dbReference>
<dbReference type="GO" id="GO:0006355">
    <property type="term" value="P:regulation of DNA-templated transcription"/>
    <property type="evidence" value="ECO:0007669"/>
    <property type="project" value="UniProtKB-UniRule"/>
</dbReference>
<dbReference type="GO" id="GO:0046718">
    <property type="term" value="P:symbiont entry into host cell"/>
    <property type="evidence" value="ECO:0007669"/>
    <property type="project" value="UniProtKB-KW"/>
</dbReference>
<dbReference type="GO" id="GO:0052151">
    <property type="term" value="P:symbiont-mediated activation of host apoptosis"/>
    <property type="evidence" value="ECO:0007669"/>
    <property type="project" value="UniProtKB-UniRule"/>
</dbReference>
<dbReference type="GO" id="GO:0039592">
    <property type="term" value="P:symbiont-mediated arrest of host cell cycle during G2/M transition"/>
    <property type="evidence" value="ECO:0007669"/>
    <property type="project" value="UniProtKB-UniRule"/>
</dbReference>
<dbReference type="GO" id="GO:0075732">
    <property type="term" value="P:viral penetration into host nucleus"/>
    <property type="evidence" value="ECO:0007669"/>
    <property type="project" value="UniProtKB-UniRule"/>
</dbReference>
<dbReference type="FunFam" id="1.20.5.90:FF:000001">
    <property type="entry name" value="Protein Vpr"/>
    <property type="match status" value="1"/>
</dbReference>
<dbReference type="Gene3D" id="6.10.210.10">
    <property type="match status" value="1"/>
</dbReference>
<dbReference type="Gene3D" id="1.20.5.90">
    <property type="entry name" value="VpR/VpX protein, C-terminal domain"/>
    <property type="match status" value="1"/>
</dbReference>
<dbReference type="HAMAP" id="MF_04080">
    <property type="entry name" value="HIV_VPR"/>
    <property type="match status" value="1"/>
</dbReference>
<dbReference type="InterPro" id="IPR000012">
    <property type="entry name" value="RetroV_VpR/X"/>
</dbReference>
<dbReference type="Pfam" id="PF00522">
    <property type="entry name" value="VPR"/>
    <property type="match status" value="1"/>
</dbReference>
<dbReference type="PRINTS" id="PR00444">
    <property type="entry name" value="HIVVPRVPX"/>
</dbReference>
<evidence type="ECO:0000255" key="1">
    <source>
        <dbReference type="HAMAP-Rule" id="MF_04080"/>
    </source>
</evidence>
<evidence type="ECO:0007829" key="2">
    <source>
        <dbReference type="PDB" id="1CEU"/>
    </source>
</evidence>
<evidence type="ECO:0007829" key="3">
    <source>
        <dbReference type="PDB" id="1ESX"/>
    </source>
</evidence>
<evidence type="ECO:0007829" key="4">
    <source>
        <dbReference type="PDB" id="1X9V"/>
    </source>
</evidence>
<organism>
    <name type="scientific">Human immunodeficiency virus type 1 group M subtype B (strain 89.6)</name>
    <name type="common">HIV-1</name>
    <dbReference type="NCBI Taxonomy" id="401671"/>
    <lineage>
        <taxon>Viruses</taxon>
        <taxon>Riboviria</taxon>
        <taxon>Pararnavirae</taxon>
        <taxon>Artverviricota</taxon>
        <taxon>Revtraviricetes</taxon>
        <taxon>Ortervirales</taxon>
        <taxon>Retroviridae</taxon>
        <taxon>Orthoretrovirinae</taxon>
        <taxon>Lentivirus</taxon>
        <taxon>Human immunodeficiency virus type 1</taxon>
    </lineage>
</organism>
<gene>
    <name evidence="1" type="primary">vpr</name>
</gene>
<proteinExistence type="evidence at protein level"/>
<protein>
    <recommendedName>
        <fullName evidence="1">Protein Vpr</fullName>
    </recommendedName>
    <alternativeName>
        <fullName evidence="1">R ORF protein</fullName>
    </alternativeName>
    <alternativeName>
        <fullName evidence="1">Viral protein R</fullName>
    </alternativeName>
</protein>
<keyword id="KW-0002">3D-structure</keyword>
<keyword id="KW-0010">Activator</keyword>
<keyword id="KW-0014">AIDS</keyword>
<keyword id="KW-0053">Apoptosis</keyword>
<keyword id="KW-0131">Cell cycle</keyword>
<keyword id="KW-1079">Host G2/M cell cycle arrest by virus</keyword>
<keyword id="KW-1048">Host nucleus</keyword>
<keyword id="KW-0945">Host-virus interaction</keyword>
<keyword id="KW-0407">Ion channel</keyword>
<keyword id="KW-0406">Ion transport</keyword>
<keyword id="KW-1121">Modulation of host cell cycle by virus</keyword>
<keyword id="KW-0597">Phosphoprotein</keyword>
<keyword id="KW-1185">Reference proteome</keyword>
<keyword id="KW-0804">Transcription</keyword>
<keyword id="KW-0805">Transcription regulation</keyword>
<keyword id="KW-0813">Transport</keyword>
<keyword id="KW-1163">Viral penetration into host nucleus</keyword>
<keyword id="KW-0946">Virion</keyword>
<keyword id="KW-1160">Virus entry into host cell</keyword>
<comment type="function">
    <text evidence="1">During virus replication, may deplete host UNG protein, and incude G2-M cell cycle arrest. Acts by targeting specific host proteins for degradation by the 26S proteasome, through association with the cellular CUL4A-DDB1 E3 ligase complex by direct interaction with host VPRPB/DCAF-1. Cell cycle arrest reportedly occurs within hours of infection and is not blocked by antiviral agents, suggesting that it is initiated by the VPR carried into the virion. Additionally, VPR induces apoptosis in a cell cycle dependent manner suggesting that these two effects are mechanistically linked. Detected in the serum and cerebrospinal fluid of AIDS patient, VPR may also induce cell death to bystander cells.</text>
</comment>
<comment type="function">
    <text evidence="1">During virus entry, plays a role in the transport of the viral pre-integration (PIC) complex to the host nucleus. This function is crucial for viral infection of non-dividing macrophages. May act directly at the nuclear pore complex, by binding nucleoporins phenylalanine-glycine (FG)-repeat regions.</text>
</comment>
<comment type="subunit">
    <text evidence="1">Homooligomer, may form homodimer. Interacts with p6-gag region of the Pr55 Gag precursor protein through a (Leu-X-X)4 motif near the C-terminus of the P6gag protein. Interacts with host UNG. May interact with host RAD23A/HHR23A. Interacts with host VPRBP/DCAF1, leading to hijack the CUL4A-RBX1-DDB1-DCAF1/VPRBP complex, mediating ubiquitination of host proteins such as TERT and ZGPAT and arrest of the cell cycle in G2 phase.</text>
</comment>
<comment type="subcellular location">
    <subcellularLocation>
        <location evidence="1">Virion</location>
    </subcellularLocation>
    <subcellularLocation>
        <location evidence="1">Host nucleus</location>
    </subcellularLocation>
    <subcellularLocation>
        <location evidence="1">Host extracellular space</location>
    </subcellularLocation>
    <text evidence="1">Incorporation into virion is dependent on p6 GAG sequences. Lacks a canonical nuclear localization signal, thus import into nucleus may function independently of the human importin pathway. Detected in high quantity in the serum and cerebrospinal fluid of AIDS patient.</text>
</comment>
<comment type="PTM">
    <text evidence="1">Phosphorylated on several residues by host. These phosphorylations regulate VPR activity for the nuclear import of the HIV-1 pre-integration complex.</text>
</comment>
<comment type="miscellaneous">
    <text evidence="1">HIV-1 lineages are divided in three main groups, M (for Major), O (for Outlier), and N (for New, or Non-M, Non-O). The vast majority of strains found worldwide belong to the group M. Group O seems to be endemic to and largely confined to Cameroon and neighboring countries in West Central Africa, where these viruses represent a small minority of HIV-1 strains. The group N is represented by a limited number of isolates from Cameroonian persons. The group M is further subdivided in 9 clades or subtypes (A to D, F to H, J and K).</text>
</comment>
<comment type="similarity">
    <text evidence="1">Belongs to the HIV-1 VPR protein family.</text>
</comment>
<sequence>MEQAPEDQGPQREPYNDWTLELLEELKNEAVRHFPRIWLHSLGQHIYETYGDTWTGVEALIRILQQLLFIHFRIGCRHSRIGIIQQRRTRNGASKS</sequence>
<organismHost>
    <name type="scientific">Homo sapiens</name>
    <name type="common">Human</name>
    <dbReference type="NCBI Taxonomy" id="9606"/>
</organismHost>
<name>VPR_HV1B9</name>
<accession>Q73369</accession>
<feature type="chain" id="PRO_0000253570" description="Protein Vpr">
    <location>
        <begin position="1"/>
        <end position="96"/>
    </location>
</feature>
<feature type="region of interest" description="Homooligomerization" evidence="1">
    <location>
        <begin position="1"/>
        <end position="42"/>
    </location>
</feature>
<feature type="modified residue" description="Phosphoserine; by host" evidence="1">
    <location>
        <position position="79"/>
    </location>
</feature>
<feature type="modified residue" description="Phosphoserine; by host" evidence="1">
    <location>
        <position position="94"/>
    </location>
</feature>
<feature type="modified residue" description="Phosphoserine; by host" evidence="1">
    <location>
        <position position="96"/>
    </location>
</feature>
<feature type="turn" evidence="2">
    <location>
        <begin position="7"/>
        <end position="10"/>
    </location>
</feature>
<feature type="helix" evidence="2">
    <location>
        <begin position="17"/>
        <end position="29"/>
    </location>
</feature>
<feature type="turn" evidence="2">
    <location>
        <begin position="30"/>
        <end position="32"/>
    </location>
</feature>
<feature type="helix" evidence="2">
    <location>
        <begin position="35"/>
        <end position="47"/>
    </location>
</feature>
<feature type="strand" evidence="3">
    <location>
        <begin position="50"/>
        <end position="55"/>
    </location>
</feature>
<feature type="helix" evidence="3">
    <location>
        <begin position="56"/>
        <end position="80"/>
    </location>
</feature>
<feature type="turn" evidence="3">
    <location>
        <begin position="81"/>
        <end position="84"/>
    </location>
</feature>
<feature type="strand" evidence="3">
    <location>
        <begin position="85"/>
        <end position="89"/>
    </location>
</feature>
<feature type="turn" evidence="4">
    <location>
        <begin position="90"/>
        <end position="92"/>
    </location>
</feature>